<feature type="chain" id="PRO_1000049320" description="Small ribosomal subunit protein bS16">
    <location>
        <begin position="1"/>
        <end position="83"/>
    </location>
</feature>
<dbReference type="EMBL" id="CP000438">
    <property type="protein sequence ID" value="ABJ12979.1"/>
    <property type="molecule type" value="Genomic_DNA"/>
</dbReference>
<dbReference type="RefSeq" id="WP_003109644.1">
    <property type="nucleotide sequence ID" value="NZ_CP034244.1"/>
</dbReference>
<dbReference type="SMR" id="Q02RL8"/>
<dbReference type="KEGG" id="pau:PA14_15970"/>
<dbReference type="PseudoCAP" id="PA14_15970"/>
<dbReference type="HOGENOM" id="CLU_100590_5_1_6"/>
<dbReference type="BioCyc" id="PAER208963:G1G74-1314-MONOMER"/>
<dbReference type="Proteomes" id="UP000000653">
    <property type="component" value="Chromosome"/>
</dbReference>
<dbReference type="GO" id="GO:0005737">
    <property type="term" value="C:cytoplasm"/>
    <property type="evidence" value="ECO:0007669"/>
    <property type="project" value="UniProtKB-ARBA"/>
</dbReference>
<dbReference type="GO" id="GO:0015935">
    <property type="term" value="C:small ribosomal subunit"/>
    <property type="evidence" value="ECO:0007669"/>
    <property type="project" value="TreeGrafter"/>
</dbReference>
<dbReference type="GO" id="GO:0003735">
    <property type="term" value="F:structural constituent of ribosome"/>
    <property type="evidence" value="ECO:0007669"/>
    <property type="project" value="InterPro"/>
</dbReference>
<dbReference type="GO" id="GO:0006412">
    <property type="term" value="P:translation"/>
    <property type="evidence" value="ECO:0007669"/>
    <property type="project" value="UniProtKB-UniRule"/>
</dbReference>
<dbReference type="Gene3D" id="3.30.1320.10">
    <property type="match status" value="1"/>
</dbReference>
<dbReference type="HAMAP" id="MF_00385">
    <property type="entry name" value="Ribosomal_bS16"/>
    <property type="match status" value="1"/>
</dbReference>
<dbReference type="InterPro" id="IPR000307">
    <property type="entry name" value="Ribosomal_bS16"/>
</dbReference>
<dbReference type="InterPro" id="IPR023803">
    <property type="entry name" value="Ribosomal_bS16_dom_sf"/>
</dbReference>
<dbReference type="NCBIfam" id="TIGR00002">
    <property type="entry name" value="S16"/>
    <property type="match status" value="1"/>
</dbReference>
<dbReference type="PANTHER" id="PTHR12919">
    <property type="entry name" value="30S RIBOSOMAL PROTEIN S16"/>
    <property type="match status" value="1"/>
</dbReference>
<dbReference type="PANTHER" id="PTHR12919:SF20">
    <property type="entry name" value="SMALL RIBOSOMAL SUBUNIT PROTEIN BS16M"/>
    <property type="match status" value="1"/>
</dbReference>
<dbReference type="Pfam" id="PF00886">
    <property type="entry name" value="Ribosomal_S16"/>
    <property type="match status" value="1"/>
</dbReference>
<dbReference type="SUPFAM" id="SSF54565">
    <property type="entry name" value="Ribosomal protein S16"/>
    <property type="match status" value="1"/>
</dbReference>
<organism>
    <name type="scientific">Pseudomonas aeruginosa (strain UCBPP-PA14)</name>
    <dbReference type="NCBI Taxonomy" id="208963"/>
    <lineage>
        <taxon>Bacteria</taxon>
        <taxon>Pseudomonadati</taxon>
        <taxon>Pseudomonadota</taxon>
        <taxon>Gammaproteobacteria</taxon>
        <taxon>Pseudomonadales</taxon>
        <taxon>Pseudomonadaceae</taxon>
        <taxon>Pseudomonas</taxon>
    </lineage>
</organism>
<reference key="1">
    <citation type="journal article" date="2006" name="Genome Biol.">
        <title>Genomic analysis reveals that Pseudomonas aeruginosa virulence is combinatorial.</title>
        <authorList>
            <person name="Lee D.G."/>
            <person name="Urbach J.M."/>
            <person name="Wu G."/>
            <person name="Liberati N.T."/>
            <person name="Feinbaum R.L."/>
            <person name="Miyata S."/>
            <person name="Diggins L.T."/>
            <person name="He J."/>
            <person name="Saucier M."/>
            <person name="Deziel E."/>
            <person name="Friedman L."/>
            <person name="Li L."/>
            <person name="Grills G."/>
            <person name="Montgomery K."/>
            <person name="Kucherlapati R."/>
            <person name="Rahme L.G."/>
            <person name="Ausubel F.M."/>
        </authorList>
    </citation>
    <scope>NUCLEOTIDE SEQUENCE [LARGE SCALE GENOMIC DNA]</scope>
    <source>
        <strain>UCBPP-PA14</strain>
    </source>
</reference>
<comment type="similarity">
    <text evidence="1">Belongs to the bacterial ribosomal protein bS16 family.</text>
</comment>
<name>RS16_PSEAB</name>
<gene>
    <name evidence="1" type="primary">rpsP</name>
    <name type="ordered locus">PA14_15970</name>
</gene>
<protein>
    <recommendedName>
        <fullName evidence="1">Small ribosomal subunit protein bS16</fullName>
    </recommendedName>
    <alternativeName>
        <fullName evidence="2">30S ribosomal protein S16</fullName>
    </alternativeName>
</protein>
<keyword id="KW-0687">Ribonucleoprotein</keyword>
<keyword id="KW-0689">Ribosomal protein</keyword>
<sequence length="83" mass="9218">MVTIRLARGGSKKRPFYHLTVTNSRNARDGRFVERIGFFNPVATGGEVRLSVDQERATYWLAQGAQPSERVAQLLKDAAKANA</sequence>
<accession>Q02RL8</accession>
<evidence type="ECO:0000255" key="1">
    <source>
        <dbReference type="HAMAP-Rule" id="MF_00385"/>
    </source>
</evidence>
<evidence type="ECO:0000305" key="2"/>
<proteinExistence type="inferred from homology"/>